<reference key="1">
    <citation type="journal article" date="2003" name="Proc. Natl. Acad. Sci. U.S.A.">
        <title>Complete genome sequence and analysis of Wolinella succinogenes.</title>
        <authorList>
            <person name="Baar C."/>
            <person name="Eppinger M."/>
            <person name="Raddatz G."/>
            <person name="Simon J."/>
            <person name="Lanz C."/>
            <person name="Klimmek O."/>
            <person name="Nandakumar R."/>
            <person name="Gross R."/>
            <person name="Rosinus A."/>
            <person name="Keller H."/>
            <person name="Jagtap P."/>
            <person name="Linke B."/>
            <person name="Meyer F."/>
            <person name="Lederer H."/>
            <person name="Schuster S.C."/>
        </authorList>
    </citation>
    <scope>NUCLEOTIDE SEQUENCE [LARGE SCALE GENOMIC DNA]</scope>
    <source>
        <strain>ATCC 29543 / DSM 1740 / CCUG 13145 / JCM 31913 / LMG 7466 / NCTC 11488 / FDC 602W</strain>
    </source>
</reference>
<protein>
    <recommendedName>
        <fullName evidence="1">Peptide deformylase</fullName>
        <shortName evidence="1">PDF</shortName>
        <ecNumber evidence="1">3.5.1.88</ecNumber>
    </recommendedName>
    <alternativeName>
        <fullName evidence="1">Polypeptide deformylase</fullName>
    </alternativeName>
</protein>
<accession>Q7M7M2</accession>
<sequence length="170" mass="19841">MLPIITYPHPLLKKRSEPVTLFDEELRQFLDEMYITMLAKNGVGLAAVQVGNPIRALIVNIPDEEGNQERENLLEIINPEFLSKEGEIQFNEGCLSVPEFYEDVTRFDRVRLTYQDRYGERHEIEAEGYLAVALQHEIDHLNGILFIDKLSLIKRKKFEKELKKRQRASL</sequence>
<feature type="chain" id="PRO_0000082882" description="Peptide deformylase">
    <location>
        <begin position="1"/>
        <end position="170"/>
    </location>
</feature>
<feature type="active site" evidence="1">
    <location>
        <position position="137"/>
    </location>
</feature>
<feature type="binding site" evidence="1">
    <location>
        <position position="94"/>
    </location>
    <ligand>
        <name>Fe cation</name>
        <dbReference type="ChEBI" id="CHEBI:24875"/>
    </ligand>
</feature>
<feature type="binding site" evidence="1">
    <location>
        <position position="136"/>
    </location>
    <ligand>
        <name>Fe cation</name>
        <dbReference type="ChEBI" id="CHEBI:24875"/>
    </ligand>
</feature>
<feature type="binding site" evidence="1">
    <location>
        <position position="140"/>
    </location>
    <ligand>
        <name>Fe cation</name>
        <dbReference type="ChEBI" id="CHEBI:24875"/>
    </ligand>
</feature>
<organism>
    <name type="scientific">Wolinella succinogenes (strain ATCC 29543 / DSM 1740 / CCUG 13145 / JCM 31913 / LMG 7466 / NCTC 11488 / FDC 602W)</name>
    <name type="common">Vibrio succinogenes</name>
    <dbReference type="NCBI Taxonomy" id="273121"/>
    <lineage>
        <taxon>Bacteria</taxon>
        <taxon>Pseudomonadati</taxon>
        <taxon>Campylobacterota</taxon>
        <taxon>Epsilonproteobacteria</taxon>
        <taxon>Campylobacterales</taxon>
        <taxon>Helicobacteraceae</taxon>
        <taxon>Wolinella</taxon>
    </lineage>
</organism>
<name>DEF_WOLSU</name>
<dbReference type="EC" id="3.5.1.88" evidence="1"/>
<dbReference type="EMBL" id="BX571663">
    <property type="protein sequence ID" value="CAE11201.1"/>
    <property type="molecule type" value="Genomic_DNA"/>
</dbReference>
<dbReference type="RefSeq" id="WP_011139983.1">
    <property type="nucleotide sequence ID" value="NC_005090.1"/>
</dbReference>
<dbReference type="SMR" id="Q7M7M2"/>
<dbReference type="STRING" id="273121.WS2212"/>
<dbReference type="KEGG" id="wsu:WS2212"/>
<dbReference type="eggNOG" id="COG0242">
    <property type="taxonomic scope" value="Bacteria"/>
</dbReference>
<dbReference type="HOGENOM" id="CLU_061901_2_0_7"/>
<dbReference type="Proteomes" id="UP000000422">
    <property type="component" value="Chromosome"/>
</dbReference>
<dbReference type="GO" id="GO:0046872">
    <property type="term" value="F:metal ion binding"/>
    <property type="evidence" value="ECO:0007669"/>
    <property type="project" value="UniProtKB-KW"/>
</dbReference>
<dbReference type="GO" id="GO:0042586">
    <property type="term" value="F:peptide deformylase activity"/>
    <property type="evidence" value="ECO:0007669"/>
    <property type="project" value="UniProtKB-UniRule"/>
</dbReference>
<dbReference type="GO" id="GO:0043686">
    <property type="term" value="P:co-translational protein modification"/>
    <property type="evidence" value="ECO:0007669"/>
    <property type="project" value="TreeGrafter"/>
</dbReference>
<dbReference type="GO" id="GO:0006412">
    <property type="term" value="P:translation"/>
    <property type="evidence" value="ECO:0007669"/>
    <property type="project" value="UniProtKB-UniRule"/>
</dbReference>
<dbReference type="CDD" id="cd00487">
    <property type="entry name" value="Pep_deformylase"/>
    <property type="match status" value="1"/>
</dbReference>
<dbReference type="Gene3D" id="3.90.45.10">
    <property type="entry name" value="Peptide deformylase"/>
    <property type="match status" value="1"/>
</dbReference>
<dbReference type="HAMAP" id="MF_00163">
    <property type="entry name" value="Pep_deformylase"/>
    <property type="match status" value="1"/>
</dbReference>
<dbReference type="InterPro" id="IPR023635">
    <property type="entry name" value="Peptide_deformylase"/>
</dbReference>
<dbReference type="InterPro" id="IPR036821">
    <property type="entry name" value="Peptide_deformylase_sf"/>
</dbReference>
<dbReference type="NCBIfam" id="TIGR00079">
    <property type="entry name" value="pept_deformyl"/>
    <property type="match status" value="1"/>
</dbReference>
<dbReference type="NCBIfam" id="NF001159">
    <property type="entry name" value="PRK00150.1-3"/>
    <property type="match status" value="1"/>
</dbReference>
<dbReference type="PANTHER" id="PTHR10458">
    <property type="entry name" value="PEPTIDE DEFORMYLASE"/>
    <property type="match status" value="1"/>
</dbReference>
<dbReference type="PANTHER" id="PTHR10458:SF22">
    <property type="entry name" value="PEPTIDE DEFORMYLASE"/>
    <property type="match status" value="1"/>
</dbReference>
<dbReference type="Pfam" id="PF01327">
    <property type="entry name" value="Pep_deformylase"/>
    <property type="match status" value="1"/>
</dbReference>
<dbReference type="PIRSF" id="PIRSF004749">
    <property type="entry name" value="Pep_def"/>
    <property type="match status" value="1"/>
</dbReference>
<dbReference type="PRINTS" id="PR01576">
    <property type="entry name" value="PDEFORMYLASE"/>
</dbReference>
<dbReference type="SUPFAM" id="SSF56420">
    <property type="entry name" value="Peptide deformylase"/>
    <property type="match status" value="1"/>
</dbReference>
<comment type="function">
    <text evidence="1">Removes the formyl group from the N-terminal Met of newly synthesized proteins. Requires at least a dipeptide for an efficient rate of reaction. N-terminal L-methionine is a prerequisite for activity but the enzyme has broad specificity at other positions.</text>
</comment>
<comment type="catalytic activity">
    <reaction evidence="1">
        <text>N-terminal N-formyl-L-methionyl-[peptide] + H2O = N-terminal L-methionyl-[peptide] + formate</text>
        <dbReference type="Rhea" id="RHEA:24420"/>
        <dbReference type="Rhea" id="RHEA-COMP:10639"/>
        <dbReference type="Rhea" id="RHEA-COMP:10640"/>
        <dbReference type="ChEBI" id="CHEBI:15377"/>
        <dbReference type="ChEBI" id="CHEBI:15740"/>
        <dbReference type="ChEBI" id="CHEBI:49298"/>
        <dbReference type="ChEBI" id="CHEBI:64731"/>
        <dbReference type="EC" id="3.5.1.88"/>
    </reaction>
</comment>
<comment type="cofactor">
    <cofactor evidence="1">
        <name>Fe(2+)</name>
        <dbReference type="ChEBI" id="CHEBI:29033"/>
    </cofactor>
    <text evidence="1">Binds 1 Fe(2+) ion.</text>
</comment>
<comment type="similarity">
    <text evidence="1">Belongs to the polypeptide deformylase family.</text>
</comment>
<gene>
    <name evidence="1" type="primary">def</name>
    <name type="ordered locus">WS2212</name>
</gene>
<evidence type="ECO:0000255" key="1">
    <source>
        <dbReference type="HAMAP-Rule" id="MF_00163"/>
    </source>
</evidence>
<keyword id="KW-0378">Hydrolase</keyword>
<keyword id="KW-0408">Iron</keyword>
<keyword id="KW-0479">Metal-binding</keyword>
<keyword id="KW-0648">Protein biosynthesis</keyword>
<keyword id="KW-1185">Reference proteome</keyword>
<proteinExistence type="inferred from homology"/>